<evidence type="ECO:0000255" key="1">
    <source>
        <dbReference type="HAMAP-Rule" id="MF_00498"/>
    </source>
</evidence>
<dbReference type="EMBL" id="CP000780">
    <property type="protein sequence ID" value="ABS56474.1"/>
    <property type="molecule type" value="Genomic_DNA"/>
</dbReference>
<dbReference type="RefSeq" id="WP_012107529.1">
    <property type="nucleotide sequence ID" value="NC_009712.1"/>
</dbReference>
<dbReference type="STRING" id="456442.Mboo_1959"/>
<dbReference type="GeneID" id="5409996"/>
<dbReference type="KEGG" id="mbn:Mboo_1959"/>
<dbReference type="eggNOG" id="arCOG04477">
    <property type="taxonomic scope" value="Archaea"/>
</dbReference>
<dbReference type="HOGENOM" id="CLU_121764_0_0_2"/>
<dbReference type="OrthoDB" id="24613at2157"/>
<dbReference type="Proteomes" id="UP000002408">
    <property type="component" value="Chromosome"/>
</dbReference>
<dbReference type="HAMAP" id="MF_00498">
    <property type="entry name" value="UPF0179"/>
    <property type="match status" value="1"/>
</dbReference>
<dbReference type="InterPro" id="IPR005369">
    <property type="entry name" value="UPF0179"/>
</dbReference>
<dbReference type="PANTHER" id="PTHR40699">
    <property type="entry name" value="UPF0179 PROTEIN MJ1627"/>
    <property type="match status" value="1"/>
</dbReference>
<dbReference type="PANTHER" id="PTHR40699:SF1">
    <property type="entry name" value="UPF0179 PROTEIN MJ1627"/>
    <property type="match status" value="1"/>
</dbReference>
<dbReference type="Pfam" id="PF03684">
    <property type="entry name" value="UPF0179"/>
    <property type="match status" value="1"/>
</dbReference>
<organism>
    <name type="scientific">Methanoregula boonei (strain DSM 21154 / JCM 14090 / 6A8)</name>
    <dbReference type="NCBI Taxonomy" id="456442"/>
    <lineage>
        <taxon>Archaea</taxon>
        <taxon>Methanobacteriati</taxon>
        <taxon>Methanobacteriota</taxon>
        <taxon>Stenosarchaea group</taxon>
        <taxon>Methanomicrobia</taxon>
        <taxon>Methanomicrobiales</taxon>
        <taxon>Methanoregulaceae</taxon>
        <taxon>Methanoregula</taxon>
    </lineage>
</organism>
<name>Y1959_METB6</name>
<comment type="similarity">
    <text evidence="1">Belongs to the UPF0179 family.</text>
</comment>
<gene>
    <name type="ordered locus">Mboo_1959</name>
</gene>
<sequence>MAETKTKVTLVGTVLAKPGTEFVYEGESPECETCKVKKACNNLNRGHRYRIITVRSTHHDCAVHLNGATAVEVMEAPVTMLISADMAMINSKIKVEFSCNKTECRSYSLCRPDGVVEGEKYVVADVLGNASDICGKGRALKLVEIRPA</sequence>
<protein>
    <recommendedName>
        <fullName evidence="1">UPF0179 protein Mboo_1959</fullName>
    </recommendedName>
</protein>
<accession>A7I9R3</accession>
<feature type="chain" id="PRO_0000378125" description="UPF0179 protein Mboo_1959">
    <location>
        <begin position="1"/>
        <end position="148"/>
    </location>
</feature>
<keyword id="KW-1185">Reference proteome</keyword>
<reference key="1">
    <citation type="journal article" date="2015" name="Microbiology">
        <title>Genome of Methanoregula boonei 6A8 reveals adaptations to oligotrophic peatland environments.</title>
        <authorList>
            <person name="Braeuer S."/>
            <person name="Cadillo-Quiroz H."/>
            <person name="Kyrpides N."/>
            <person name="Woyke T."/>
            <person name="Goodwin L."/>
            <person name="Detter C."/>
            <person name="Podell S."/>
            <person name="Yavitt J.B."/>
            <person name="Zinder S.H."/>
        </authorList>
    </citation>
    <scope>NUCLEOTIDE SEQUENCE [LARGE SCALE GENOMIC DNA]</scope>
    <source>
        <strain>DSM 21154 / JCM 14090 / 6A8</strain>
    </source>
</reference>
<proteinExistence type="inferred from homology"/>